<proteinExistence type="inferred from homology"/>
<feature type="chain" id="PRO_1000186494" description="Bifunctional protein GlmU">
    <location>
        <begin position="1"/>
        <end position="455"/>
    </location>
</feature>
<feature type="region of interest" description="Pyrophosphorylase" evidence="1">
    <location>
        <begin position="1"/>
        <end position="228"/>
    </location>
</feature>
<feature type="region of interest" description="Linker" evidence="1">
    <location>
        <begin position="229"/>
        <end position="249"/>
    </location>
</feature>
<feature type="region of interest" description="N-acetyltransferase" evidence="1">
    <location>
        <begin position="250"/>
        <end position="455"/>
    </location>
</feature>
<feature type="active site" description="Proton acceptor" evidence="1">
    <location>
        <position position="362"/>
    </location>
</feature>
<feature type="binding site" evidence="1">
    <location>
        <begin position="10"/>
        <end position="13"/>
    </location>
    <ligand>
        <name>UDP-N-acetyl-alpha-D-glucosamine</name>
        <dbReference type="ChEBI" id="CHEBI:57705"/>
    </ligand>
</feature>
<feature type="binding site" evidence="1">
    <location>
        <position position="24"/>
    </location>
    <ligand>
        <name>UDP-N-acetyl-alpha-D-glucosamine</name>
        <dbReference type="ChEBI" id="CHEBI:57705"/>
    </ligand>
</feature>
<feature type="binding site" evidence="1">
    <location>
        <position position="76"/>
    </location>
    <ligand>
        <name>UDP-N-acetyl-alpha-D-glucosamine</name>
        <dbReference type="ChEBI" id="CHEBI:57705"/>
    </ligand>
</feature>
<feature type="binding site" evidence="1">
    <location>
        <begin position="81"/>
        <end position="82"/>
    </location>
    <ligand>
        <name>UDP-N-acetyl-alpha-D-glucosamine</name>
        <dbReference type="ChEBI" id="CHEBI:57705"/>
    </ligand>
</feature>
<feature type="binding site" evidence="1">
    <location>
        <begin position="103"/>
        <end position="105"/>
    </location>
    <ligand>
        <name>UDP-N-acetyl-alpha-D-glucosamine</name>
        <dbReference type="ChEBI" id="CHEBI:57705"/>
    </ligand>
</feature>
<feature type="binding site" evidence="1">
    <location>
        <position position="105"/>
    </location>
    <ligand>
        <name>Mg(2+)</name>
        <dbReference type="ChEBI" id="CHEBI:18420"/>
    </ligand>
</feature>
<feature type="binding site" evidence="1">
    <location>
        <position position="138"/>
    </location>
    <ligand>
        <name>UDP-N-acetyl-alpha-D-glucosamine</name>
        <dbReference type="ChEBI" id="CHEBI:57705"/>
    </ligand>
</feature>
<feature type="binding site" evidence="1">
    <location>
        <position position="153"/>
    </location>
    <ligand>
        <name>UDP-N-acetyl-alpha-D-glucosamine</name>
        <dbReference type="ChEBI" id="CHEBI:57705"/>
    </ligand>
</feature>
<feature type="binding site" evidence="1">
    <location>
        <position position="168"/>
    </location>
    <ligand>
        <name>UDP-N-acetyl-alpha-D-glucosamine</name>
        <dbReference type="ChEBI" id="CHEBI:57705"/>
    </ligand>
</feature>
<feature type="binding site" evidence="1">
    <location>
        <position position="226"/>
    </location>
    <ligand>
        <name>Mg(2+)</name>
        <dbReference type="ChEBI" id="CHEBI:18420"/>
    </ligand>
</feature>
<feature type="binding site" evidence="1">
    <location>
        <position position="226"/>
    </location>
    <ligand>
        <name>UDP-N-acetyl-alpha-D-glucosamine</name>
        <dbReference type="ChEBI" id="CHEBI:57705"/>
    </ligand>
</feature>
<feature type="binding site" evidence="1">
    <location>
        <position position="332"/>
    </location>
    <ligand>
        <name>UDP-N-acetyl-alpha-D-glucosamine</name>
        <dbReference type="ChEBI" id="CHEBI:57705"/>
    </ligand>
</feature>
<feature type="binding site" evidence="1">
    <location>
        <position position="350"/>
    </location>
    <ligand>
        <name>UDP-N-acetyl-alpha-D-glucosamine</name>
        <dbReference type="ChEBI" id="CHEBI:57705"/>
    </ligand>
</feature>
<feature type="binding site" evidence="1">
    <location>
        <position position="365"/>
    </location>
    <ligand>
        <name>UDP-N-acetyl-alpha-D-glucosamine</name>
        <dbReference type="ChEBI" id="CHEBI:57705"/>
    </ligand>
</feature>
<feature type="binding site" evidence="1">
    <location>
        <position position="376"/>
    </location>
    <ligand>
        <name>UDP-N-acetyl-alpha-D-glucosamine</name>
        <dbReference type="ChEBI" id="CHEBI:57705"/>
    </ligand>
</feature>
<feature type="binding site" evidence="1">
    <location>
        <position position="379"/>
    </location>
    <ligand>
        <name>acetyl-CoA</name>
        <dbReference type="ChEBI" id="CHEBI:57288"/>
    </ligand>
</feature>
<feature type="binding site" evidence="1">
    <location>
        <begin position="385"/>
        <end position="386"/>
    </location>
    <ligand>
        <name>acetyl-CoA</name>
        <dbReference type="ChEBI" id="CHEBI:57288"/>
    </ligand>
</feature>
<feature type="binding site" evidence="1">
    <location>
        <position position="404"/>
    </location>
    <ligand>
        <name>acetyl-CoA</name>
        <dbReference type="ChEBI" id="CHEBI:57288"/>
    </ligand>
</feature>
<feature type="binding site" evidence="1">
    <location>
        <position position="422"/>
    </location>
    <ligand>
        <name>acetyl-CoA</name>
        <dbReference type="ChEBI" id="CHEBI:57288"/>
    </ligand>
</feature>
<feature type="binding site" evidence="1">
    <location>
        <position position="439"/>
    </location>
    <ligand>
        <name>acetyl-CoA</name>
        <dbReference type="ChEBI" id="CHEBI:57288"/>
    </ligand>
</feature>
<dbReference type="EC" id="2.7.7.23" evidence="1"/>
<dbReference type="EC" id="2.3.1.157" evidence="1"/>
<dbReference type="EMBL" id="CP001111">
    <property type="protein sequence ID" value="ACF53207.1"/>
    <property type="molecule type" value="Genomic_DNA"/>
</dbReference>
<dbReference type="RefSeq" id="WP_006394399.1">
    <property type="nucleotide sequence ID" value="NC_011071.1"/>
</dbReference>
<dbReference type="SMR" id="B4SJR6"/>
<dbReference type="STRING" id="391008.Smal_3508"/>
<dbReference type="KEGG" id="smt:Smal_3508"/>
<dbReference type="eggNOG" id="COG1207">
    <property type="taxonomic scope" value="Bacteria"/>
</dbReference>
<dbReference type="HOGENOM" id="CLU_029499_15_2_6"/>
<dbReference type="OrthoDB" id="9775031at2"/>
<dbReference type="UniPathway" id="UPA00113">
    <property type="reaction ID" value="UER00532"/>
</dbReference>
<dbReference type="UniPathway" id="UPA00113">
    <property type="reaction ID" value="UER00533"/>
</dbReference>
<dbReference type="UniPathway" id="UPA00973"/>
<dbReference type="Proteomes" id="UP000001867">
    <property type="component" value="Chromosome"/>
</dbReference>
<dbReference type="GO" id="GO:0005737">
    <property type="term" value="C:cytoplasm"/>
    <property type="evidence" value="ECO:0007669"/>
    <property type="project" value="UniProtKB-SubCell"/>
</dbReference>
<dbReference type="GO" id="GO:0016020">
    <property type="term" value="C:membrane"/>
    <property type="evidence" value="ECO:0007669"/>
    <property type="project" value="GOC"/>
</dbReference>
<dbReference type="GO" id="GO:0019134">
    <property type="term" value="F:glucosamine-1-phosphate N-acetyltransferase activity"/>
    <property type="evidence" value="ECO:0007669"/>
    <property type="project" value="UniProtKB-UniRule"/>
</dbReference>
<dbReference type="GO" id="GO:0000287">
    <property type="term" value="F:magnesium ion binding"/>
    <property type="evidence" value="ECO:0007669"/>
    <property type="project" value="UniProtKB-UniRule"/>
</dbReference>
<dbReference type="GO" id="GO:0003977">
    <property type="term" value="F:UDP-N-acetylglucosamine diphosphorylase activity"/>
    <property type="evidence" value="ECO:0007669"/>
    <property type="project" value="UniProtKB-UniRule"/>
</dbReference>
<dbReference type="GO" id="GO:0000902">
    <property type="term" value="P:cell morphogenesis"/>
    <property type="evidence" value="ECO:0007669"/>
    <property type="project" value="UniProtKB-UniRule"/>
</dbReference>
<dbReference type="GO" id="GO:0071555">
    <property type="term" value="P:cell wall organization"/>
    <property type="evidence" value="ECO:0007669"/>
    <property type="project" value="UniProtKB-KW"/>
</dbReference>
<dbReference type="GO" id="GO:0009245">
    <property type="term" value="P:lipid A biosynthetic process"/>
    <property type="evidence" value="ECO:0007669"/>
    <property type="project" value="UniProtKB-UniRule"/>
</dbReference>
<dbReference type="GO" id="GO:0009252">
    <property type="term" value="P:peptidoglycan biosynthetic process"/>
    <property type="evidence" value="ECO:0007669"/>
    <property type="project" value="UniProtKB-UniRule"/>
</dbReference>
<dbReference type="GO" id="GO:0008360">
    <property type="term" value="P:regulation of cell shape"/>
    <property type="evidence" value="ECO:0007669"/>
    <property type="project" value="UniProtKB-KW"/>
</dbReference>
<dbReference type="GO" id="GO:0006048">
    <property type="term" value="P:UDP-N-acetylglucosamine biosynthetic process"/>
    <property type="evidence" value="ECO:0007669"/>
    <property type="project" value="UniProtKB-UniPathway"/>
</dbReference>
<dbReference type="CDD" id="cd02540">
    <property type="entry name" value="GT2_GlmU_N_bac"/>
    <property type="match status" value="1"/>
</dbReference>
<dbReference type="CDD" id="cd03353">
    <property type="entry name" value="LbH_GlmU_C"/>
    <property type="match status" value="1"/>
</dbReference>
<dbReference type="Gene3D" id="2.160.10.10">
    <property type="entry name" value="Hexapeptide repeat proteins"/>
    <property type="match status" value="1"/>
</dbReference>
<dbReference type="Gene3D" id="3.90.550.10">
    <property type="entry name" value="Spore Coat Polysaccharide Biosynthesis Protein SpsA, Chain A"/>
    <property type="match status" value="1"/>
</dbReference>
<dbReference type="HAMAP" id="MF_01631">
    <property type="entry name" value="GlmU"/>
    <property type="match status" value="1"/>
</dbReference>
<dbReference type="InterPro" id="IPR005882">
    <property type="entry name" value="Bifunctional_GlmU"/>
</dbReference>
<dbReference type="InterPro" id="IPR050065">
    <property type="entry name" value="GlmU-like"/>
</dbReference>
<dbReference type="InterPro" id="IPR038009">
    <property type="entry name" value="GlmU_C_LbH"/>
</dbReference>
<dbReference type="InterPro" id="IPR001451">
    <property type="entry name" value="Hexapep"/>
</dbReference>
<dbReference type="InterPro" id="IPR025877">
    <property type="entry name" value="MobA-like_NTP_Trfase"/>
</dbReference>
<dbReference type="InterPro" id="IPR029044">
    <property type="entry name" value="Nucleotide-diphossugar_trans"/>
</dbReference>
<dbReference type="InterPro" id="IPR011004">
    <property type="entry name" value="Trimer_LpxA-like_sf"/>
</dbReference>
<dbReference type="NCBIfam" id="TIGR01173">
    <property type="entry name" value="glmU"/>
    <property type="match status" value="1"/>
</dbReference>
<dbReference type="PANTHER" id="PTHR43584:SF3">
    <property type="entry name" value="BIFUNCTIONAL PROTEIN GLMU"/>
    <property type="match status" value="1"/>
</dbReference>
<dbReference type="PANTHER" id="PTHR43584">
    <property type="entry name" value="NUCLEOTIDYL TRANSFERASE"/>
    <property type="match status" value="1"/>
</dbReference>
<dbReference type="Pfam" id="PF14602">
    <property type="entry name" value="Hexapep_2"/>
    <property type="match status" value="1"/>
</dbReference>
<dbReference type="Pfam" id="PF12804">
    <property type="entry name" value="NTP_transf_3"/>
    <property type="match status" value="1"/>
</dbReference>
<dbReference type="SUPFAM" id="SSF53448">
    <property type="entry name" value="Nucleotide-diphospho-sugar transferases"/>
    <property type="match status" value="1"/>
</dbReference>
<dbReference type="SUPFAM" id="SSF51161">
    <property type="entry name" value="Trimeric LpxA-like enzymes"/>
    <property type="match status" value="1"/>
</dbReference>
<comment type="function">
    <text evidence="1">Catalyzes the last two sequential reactions in the de novo biosynthetic pathway for UDP-N-acetylglucosamine (UDP-GlcNAc). The C-terminal domain catalyzes the transfer of acetyl group from acetyl coenzyme A to glucosamine-1-phosphate (GlcN-1-P) to produce N-acetylglucosamine-1-phosphate (GlcNAc-1-P), which is converted into UDP-GlcNAc by the transfer of uridine 5-monophosphate (from uridine 5-triphosphate), a reaction catalyzed by the N-terminal domain.</text>
</comment>
<comment type="catalytic activity">
    <reaction evidence="1">
        <text>alpha-D-glucosamine 1-phosphate + acetyl-CoA = N-acetyl-alpha-D-glucosamine 1-phosphate + CoA + H(+)</text>
        <dbReference type="Rhea" id="RHEA:13725"/>
        <dbReference type="ChEBI" id="CHEBI:15378"/>
        <dbReference type="ChEBI" id="CHEBI:57287"/>
        <dbReference type="ChEBI" id="CHEBI:57288"/>
        <dbReference type="ChEBI" id="CHEBI:57776"/>
        <dbReference type="ChEBI" id="CHEBI:58516"/>
        <dbReference type="EC" id="2.3.1.157"/>
    </reaction>
</comment>
<comment type="catalytic activity">
    <reaction evidence="1">
        <text>N-acetyl-alpha-D-glucosamine 1-phosphate + UTP + H(+) = UDP-N-acetyl-alpha-D-glucosamine + diphosphate</text>
        <dbReference type="Rhea" id="RHEA:13509"/>
        <dbReference type="ChEBI" id="CHEBI:15378"/>
        <dbReference type="ChEBI" id="CHEBI:33019"/>
        <dbReference type="ChEBI" id="CHEBI:46398"/>
        <dbReference type="ChEBI" id="CHEBI:57705"/>
        <dbReference type="ChEBI" id="CHEBI:57776"/>
        <dbReference type="EC" id="2.7.7.23"/>
    </reaction>
</comment>
<comment type="cofactor">
    <cofactor evidence="1">
        <name>Mg(2+)</name>
        <dbReference type="ChEBI" id="CHEBI:18420"/>
    </cofactor>
    <text evidence="1">Binds 1 Mg(2+) ion per subunit.</text>
</comment>
<comment type="pathway">
    <text evidence="1">Nucleotide-sugar biosynthesis; UDP-N-acetyl-alpha-D-glucosamine biosynthesis; N-acetyl-alpha-D-glucosamine 1-phosphate from alpha-D-glucosamine 6-phosphate (route II): step 2/2.</text>
</comment>
<comment type="pathway">
    <text evidence="1">Nucleotide-sugar biosynthesis; UDP-N-acetyl-alpha-D-glucosamine biosynthesis; UDP-N-acetyl-alpha-D-glucosamine from N-acetyl-alpha-D-glucosamine 1-phosphate: step 1/1.</text>
</comment>
<comment type="pathway">
    <text evidence="1">Bacterial outer membrane biogenesis; LPS lipid A biosynthesis.</text>
</comment>
<comment type="subunit">
    <text evidence="1">Homotrimer.</text>
</comment>
<comment type="subcellular location">
    <subcellularLocation>
        <location evidence="1">Cytoplasm</location>
    </subcellularLocation>
</comment>
<comment type="similarity">
    <text evidence="1">In the N-terminal section; belongs to the N-acetylglucosamine-1-phosphate uridyltransferase family.</text>
</comment>
<comment type="similarity">
    <text evidence="1">In the C-terminal section; belongs to the transferase hexapeptide repeat family.</text>
</comment>
<gene>
    <name evidence="1" type="primary">glmU</name>
    <name type="ordered locus">Smal_3508</name>
</gene>
<accession>B4SJR6</accession>
<name>GLMU_STRM5</name>
<evidence type="ECO:0000255" key="1">
    <source>
        <dbReference type="HAMAP-Rule" id="MF_01631"/>
    </source>
</evidence>
<organism>
    <name type="scientific">Stenotrophomonas maltophilia (strain R551-3)</name>
    <dbReference type="NCBI Taxonomy" id="391008"/>
    <lineage>
        <taxon>Bacteria</taxon>
        <taxon>Pseudomonadati</taxon>
        <taxon>Pseudomonadota</taxon>
        <taxon>Gammaproteobacteria</taxon>
        <taxon>Lysobacterales</taxon>
        <taxon>Lysobacteraceae</taxon>
        <taxon>Stenotrophomonas</taxon>
        <taxon>Stenotrophomonas maltophilia group</taxon>
    </lineage>
</organism>
<sequence>MTQPLHVIILAAGAGKRMKSVLPKVLQPIAGQPMLAHVIAAARELEPAAIHVVYGHGGEAVRQHFAGQPDLQWAEQAQQLGTGHAVAQAMPQVPDAAQVLVLYGDVPLIRAQTLRDLLAQPGRLAVLVAEMDDPTGYGRVLRDAEGKVGSIVEQKDANDDQLRVRTINTGIIAAESTALRRWLSQLSNSNAQGEYYLTDVFAFAAHEYTPAEMALVADAQEAEGANDPWQLSQLERAWQRRAVRALCAQGARVRDPARLDIRGTVSVGNDVLIDVDVVLEGNIVLGDGVTIGPFNRLKDVNLGPGTEVRAHCDLEGVITEGAAQVGPFARLRPGTVLADGVHVGNFVETKKVTLGVGSKANHLTYLGDAVIGSKVNIGAGTITCNYDGVNKSTTTIGDNAFIGSNSSLVAPVTIGDSATIAAGSVITRDAPDGKLTLARARQETIDGWKRPLKKS</sequence>
<keyword id="KW-0012">Acyltransferase</keyword>
<keyword id="KW-0133">Cell shape</keyword>
<keyword id="KW-0961">Cell wall biogenesis/degradation</keyword>
<keyword id="KW-0963">Cytoplasm</keyword>
<keyword id="KW-0460">Magnesium</keyword>
<keyword id="KW-0479">Metal-binding</keyword>
<keyword id="KW-0511">Multifunctional enzyme</keyword>
<keyword id="KW-0548">Nucleotidyltransferase</keyword>
<keyword id="KW-0573">Peptidoglycan synthesis</keyword>
<keyword id="KW-0677">Repeat</keyword>
<keyword id="KW-0808">Transferase</keyword>
<reference key="1">
    <citation type="submission" date="2008-06" db="EMBL/GenBank/DDBJ databases">
        <title>Complete sequence of Stenotrophomonas maltophilia R551-3.</title>
        <authorList>
            <consortium name="US DOE Joint Genome Institute"/>
            <person name="Lucas S."/>
            <person name="Copeland A."/>
            <person name="Lapidus A."/>
            <person name="Glavina del Rio T."/>
            <person name="Dalin E."/>
            <person name="Tice H."/>
            <person name="Pitluck S."/>
            <person name="Chain P."/>
            <person name="Malfatti S."/>
            <person name="Shin M."/>
            <person name="Vergez L."/>
            <person name="Lang D."/>
            <person name="Schmutz J."/>
            <person name="Larimer F."/>
            <person name="Land M."/>
            <person name="Hauser L."/>
            <person name="Kyrpides N."/>
            <person name="Mikhailova N."/>
            <person name="Taghavi S."/>
            <person name="Monchy S."/>
            <person name="Newman L."/>
            <person name="Vangronsveld J."/>
            <person name="van der Lelie D."/>
            <person name="Richardson P."/>
        </authorList>
    </citation>
    <scope>NUCLEOTIDE SEQUENCE [LARGE SCALE GENOMIC DNA]</scope>
    <source>
        <strain>R551-3</strain>
    </source>
</reference>
<protein>
    <recommendedName>
        <fullName evidence="1">Bifunctional protein GlmU</fullName>
    </recommendedName>
    <domain>
        <recommendedName>
            <fullName evidence="1">UDP-N-acetylglucosamine pyrophosphorylase</fullName>
            <ecNumber evidence="1">2.7.7.23</ecNumber>
        </recommendedName>
        <alternativeName>
            <fullName evidence="1">N-acetylglucosamine-1-phosphate uridyltransferase</fullName>
        </alternativeName>
    </domain>
    <domain>
        <recommendedName>
            <fullName evidence="1">Glucosamine-1-phosphate N-acetyltransferase</fullName>
            <ecNumber evidence="1">2.3.1.157</ecNumber>
        </recommendedName>
    </domain>
</protein>